<dbReference type="EC" id="6.1.1.17" evidence="1"/>
<dbReference type="EMBL" id="AP008981">
    <property type="protein sequence ID" value="BAG40235.1"/>
    <property type="molecule type" value="Genomic_DNA"/>
</dbReference>
<dbReference type="RefSeq" id="WP_012461388.1">
    <property type="nucleotide sequence ID" value="NC_010793.1"/>
</dbReference>
<dbReference type="SMR" id="B3CRX8"/>
<dbReference type="KEGG" id="ott:OTT_0777"/>
<dbReference type="HOGENOM" id="CLU_015768_6_1_5"/>
<dbReference type="OrthoDB" id="9807503at2"/>
<dbReference type="Proteomes" id="UP000001033">
    <property type="component" value="Chromosome"/>
</dbReference>
<dbReference type="GO" id="GO:0005737">
    <property type="term" value="C:cytoplasm"/>
    <property type="evidence" value="ECO:0007669"/>
    <property type="project" value="UniProtKB-SubCell"/>
</dbReference>
<dbReference type="GO" id="GO:0005524">
    <property type="term" value="F:ATP binding"/>
    <property type="evidence" value="ECO:0007669"/>
    <property type="project" value="UniProtKB-UniRule"/>
</dbReference>
<dbReference type="GO" id="GO:0004818">
    <property type="term" value="F:glutamate-tRNA ligase activity"/>
    <property type="evidence" value="ECO:0007669"/>
    <property type="project" value="UniProtKB-UniRule"/>
</dbReference>
<dbReference type="GO" id="GO:0000049">
    <property type="term" value="F:tRNA binding"/>
    <property type="evidence" value="ECO:0007669"/>
    <property type="project" value="InterPro"/>
</dbReference>
<dbReference type="GO" id="GO:0006424">
    <property type="term" value="P:glutamyl-tRNA aminoacylation"/>
    <property type="evidence" value="ECO:0007669"/>
    <property type="project" value="UniProtKB-UniRule"/>
</dbReference>
<dbReference type="Gene3D" id="1.10.10.350">
    <property type="match status" value="1"/>
</dbReference>
<dbReference type="Gene3D" id="3.40.50.620">
    <property type="entry name" value="HUPs"/>
    <property type="match status" value="1"/>
</dbReference>
<dbReference type="HAMAP" id="MF_00022">
    <property type="entry name" value="Glu_tRNA_synth_type1"/>
    <property type="match status" value="1"/>
</dbReference>
<dbReference type="InterPro" id="IPR045462">
    <property type="entry name" value="aa-tRNA-synth_I_cd-bd"/>
</dbReference>
<dbReference type="InterPro" id="IPR020751">
    <property type="entry name" value="aa-tRNA-synth_I_codon-bd_sub2"/>
</dbReference>
<dbReference type="InterPro" id="IPR001412">
    <property type="entry name" value="aa-tRNA-synth_I_CS"/>
</dbReference>
<dbReference type="InterPro" id="IPR008925">
    <property type="entry name" value="aa_tRNA-synth_I_cd-bd_sf"/>
</dbReference>
<dbReference type="InterPro" id="IPR004527">
    <property type="entry name" value="Glu-tRNA-ligase_bac/mito"/>
</dbReference>
<dbReference type="InterPro" id="IPR000924">
    <property type="entry name" value="Glu/Gln-tRNA-synth"/>
</dbReference>
<dbReference type="InterPro" id="IPR020058">
    <property type="entry name" value="Glu/Gln-tRNA-synth_Ib_cat-dom"/>
</dbReference>
<dbReference type="InterPro" id="IPR049940">
    <property type="entry name" value="GluQ/Sye"/>
</dbReference>
<dbReference type="InterPro" id="IPR014729">
    <property type="entry name" value="Rossmann-like_a/b/a_fold"/>
</dbReference>
<dbReference type="NCBIfam" id="TIGR00464">
    <property type="entry name" value="gltX_bact"/>
    <property type="match status" value="1"/>
</dbReference>
<dbReference type="PANTHER" id="PTHR43311">
    <property type="entry name" value="GLUTAMATE--TRNA LIGASE"/>
    <property type="match status" value="1"/>
</dbReference>
<dbReference type="PANTHER" id="PTHR43311:SF2">
    <property type="entry name" value="GLUTAMATE--TRNA LIGASE, MITOCHONDRIAL-RELATED"/>
    <property type="match status" value="1"/>
</dbReference>
<dbReference type="Pfam" id="PF19269">
    <property type="entry name" value="Anticodon_2"/>
    <property type="match status" value="1"/>
</dbReference>
<dbReference type="Pfam" id="PF00749">
    <property type="entry name" value="tRNA-synt_1c"/>
    <property type="match status" value="1"/>
</dbReference>
<dbReference type="PRINTS" id="PR00987">
    <property type="entry name" value="TRNASYNTHGLU"/>
</dbReference>
<dbReference type="SUPFAM" id="SSF48163">
    <property type="entry name" value="An anticodon-binding domain of class I aminoacyl-tRNA synthetases"/>
    <property type="match status" value="1"/>
</dbReference>
<dbReference type="SUPFAM" id="SSF52374">
    <property type="entry name" value="Nucleotidylyl transferase"/>
    <property type="match status" value="1"/>
</dbReference>
<dbReference type="PROSITE" id="PS00178">
    <property type="entry name" value="AA_TRNA_LIGASE_I"/>
    <property type="match status" value="1"/>
</dbReference>
<organism>
    <name type="scientific">Orientia tsutsugamushi (strain Ikeda)</name>
    <name type="common">Rickettsia tsutsugamushi</name>
    <dbReference type="NCBI Taxonomy" id="334380"/>
    <lineage>
        <taxon>Bacteria</taxon>
        <taxon>Pseudomonadati</taxon>
        <taxon>Pseudomonadota</taxon>
        <taxon>Alphaproteobacteria</taxon>
        <taxon>Rickettsiales</taxon>
        <taxon>Rickettsiaceae</taxon>
        <taxon>Rickettsieae</taxon>
        <taxon>Orientia</taxon>
    </lineage>
</organism>
<accession>B3CRX8</accession>
<protein>
    <recommendedName>
        <fullName evidence="1">Glutamate--tRNA ligase 1</fullName>
        <ecNumber evidence="1">6.1.1.17</ecNumber>
    </recommendedName>
    <alternativeName>
        <fullName evidence="1">Glutamyl-tRNA synthetase 1</fullName>
        <shortName evidence="1">GluRS 1</shortName>
    </alternativeName>
</protein>
<name>SYE1_ORITI</name>
<reference key="1">
    <citation type="journal article" date="2008" name="DNA Res.">
        <title>The whole-genome sequencing of the obligate intracellular bacterium Orientia tsutsugamushi revealed massive gene amplification during reductive genome evolution.</title>
        <authorList>
            <person name="Nakayama K."/>
            <person name="Yamashita A."/>
            <person name="Kurokawa K."/>
            <person name="Morimoto T."/>
            <person name="Ogawa M."/>
            <person name="Fukuhara M."/>
            <person name="Urakami H."/>
            <person name="Ohnishi M."/>
            <person name="Uchiyama I."/>
            <person name="Ogura Y."/>
            <person name="Ooka T."/>
            <person name="Oshima K."/>
            <person name="Tamura A."/>
            <person name="Hattori M."/>
            <person name="Hayashi T."/>
        </authorList>
    </citation>
    <scope>NUCLEOTIDE SEQUENCE [LARGE SCALE GENOMIC DNA]</scope>
    <source>
        <strain>Ikeda</strain>
    </source>
</reference>
<proteinExistence type="inferred from homology"/>
<keyword id="KW-0030">Aminoacyl-tRNA synthetase</keyword>
<keyword id="KW-0067">ATP-binding</keyword>
<keyword id="KW-0963">Cytoplasm</keyword>
<keyword id="KW-0436">Ligase</keyword>
<keyword id="KW-0547">Nucleotide-binding</keyword>
<keyword id="KW-0648">Protein biosynthesis</keyword>
<comment type="function">
    <text evidence="1">Catalyzes the attachment of glutamate to tRNA(Glu) in a two-step reaction: glutamate is first activated by ATP to form Glu-AMP and then transferred to the acceptor end of tRNA(Glu).</text>
</comment>
<comment type="catalytic activity">
    <reaction evidence="1">
        <text>tRNA(Glu) + L-glutamate + ATP = L-glutamyl-tRNA(Glu) + AMP + diphosphate</text>
        <dbReference type="Rhea" id="RHEA:23540"/>
        <dbReference type="Rhea" id="RHEA-COMP:9663"/>
        <dbReference type="Rhea" id="RHEA-COMP:9680"/>
        <dbReference type="ChEBI" id="CHEBI:29985"/>
        <dbReference type="ChEBI" id="CHEBI:30616"/>
        <dbReference type="ChEBI" id="CHEBI:33019"/>
        <dbReference type="ChEBI" id="CHEBI:78442"/>
        <dbReference type="ChEBI" id="CHEBI:78520"/>
        <dbReference type="ChEBI" id="CHEBI:456215"/>
        <dbReference type="EC" id="6.1.1.17"/>
    </reaction>
</comment>
<comment type="subunit">
    <text evidence="1">Monomer.</text>
</comment>
<comment type="subcellular location">
    <subcellularLocation>
        <location evidence="1">Cytoplasm</location>
    </subcellularLocation>
</comment>
<comment type="similarity">
    <text evidence="1">Belongs to the class-I aminoacyl-tRNA synthetase family. Glutamate--tRNA ligase type 1 subfamily.</text>
</comment>
<sequence length="448" mass="51379">MTVITRFAPSPTGKLHIGNVRVALVNWLYAQKYNGNFILRIDDTDRDRSKVEYHEAIIKDLQWLGINWNSSFLQSTRFNKYAAAKQYLISSGRLYECYETPEMLEIERKRQLASGYPPIYSRKSLELTTAQKVQLQAEGYKVHYRFLIDRNKPIIWNDLIKGEIKYDGSNVSDPIVIKEDGTMIYMLCSVIDDIEYRISHIIRGEDHITNTAIQIQMFEALGAAIPQLGHLSLIKSDSGKISKRIGGFTIDYLKDQLGIEPMAVNNLLALSGTSNNVDAYFSLESLITKFDLSAFSKSTIIYNENELVTLNHKLLVNTEYDTIKHRLTAIGLPDVTKEFWLAVRHNLNTLNDIKIWWQICYLPTLDKFQEQDAEFLKLAAELLPSGKLTDNSWDDWVQNIIKATNRRGKALFMPLRLALTGITYGPELKYLLPLIGGDEVRARLLRYQ</sequence>
<evidence type="ECO:0000255" key="1">
    <source>
        <dbReference type="HAMAP-Rule" id="MF_00022"/>
    </source>
</evidence>
<gene>
    <name evidence="1" type="primary">gltX1</name>
    <name type="ordered locus">OTT_0777</name>
</gene>
<feature type="chain" id="PRO_0000367727" description="Glutamate--tRNA ligase 1">
    <location>
        <begin position="1"/>
        <end position="448"/>
    </location>
</feature>
<feature type="short sequence motif" description="'HIGH' region" evidence="1">
    <location>
        <begin position="9"/>
        <end position="19"/>
    </location>
</feature>
<feature type="short sequence motif" description="'KMSKS' region" evidence="1">
    <location>
        <begin position="240"/>
        <end position="244"/>
    </location>
</feature>
<feature type="binding site" evidence="1">
    <location>
        <position position="243"/>
    </location>
    <ligand>
        <name>ATP</name>
        <dbReference type="ChEBI" id="CHEBI:30616"/>
    </ligand>
</feature>